<name>COFC_HALS3</name>
<dbReference type="EC" id="2.7.7.68" evidence="1"/>
<dbReference type="EMBL" id="AM774415">
    <property type="protein sequence ID" value="CAP14416.1"/>
    <property type="molecule type" value="Genomic_DNA"/>
</dbReference>
<dbReference type="RefSeq" id="WP_010903420.1">
    <property type="nucleotide sequence ID" value="NC_010364.1"/>
</dbReference>
<dbReference type="SMR" id="B0R6P7"/>
<dbReference type="EnsemblBacteria" id="CAP14416">
    <property type="protein sequence ID" value="CAP14416"/>
    <property type="gene ID" value="OE_3721F"/>
</dbReference>
<dbReference type="GeneID" id="89350131"/>
<dbReference type="KEGG" id="hsl:OE_3721F"/>
<dbReference type="HOGENOM" id="CLU_076569_2_0_2"/>
<dbReference type="PhylomeDB" id="B0R6P7"/>
<dbReference type="UniPathway" id="UPA00071"/>
<dbReference type="Proteomes" id="UP000001321">
    <property type="component" value="Chromosome"/>
</dbReference>
<dbReference type="GO" id="GO:0005525">
    <property type="term" value="F:GTP binding"/>
    <property type="evidence" value="ECO:0007669"/>
    <property type="project" value="UniProtKB-KW"/>
</dbReference>
<dbReference type="GO" id="GO:0043814">
    <property type="term" value="F:phospholactate guanylyltransferase activity"/>
    <property type="evidence" value="ECO:0007669"/>
    <property type="project" value="UniProtKB-EC"/>
</dbReference>
<dbReference type="GO" id="GO:0052645">
    <property type="term" value="P:F420-0 metabolic process"/>
    <property type="evidence" value="ECO:0007669"/>
    <property type="project" value="UniProtKB-UniRule"/>
</dbReference>
<dbReference type="Gene3D" id="6.10.140.50">
    <property type="match status" value="1"/>
</dbReference>
<dbReference type="Gene3D" id="3.90.550.10">
    <property type="entry name" value="Spore Coat Polysaccharide Biosynthesis Protein SpsA, Chain A"/>
    <property type="match status" value="1"/>
</dbReference>
<dbReference type="HAMAP" id="MF_02114">
    <property type="entry name" value="CofC"/>
    <property type="match status" value="1"/>
</dbReference>
<dbReference type="InterPro" id="IPR002835">
    <property type="entry name" value="CofC"/>
</dbReference>
<dbReference type="InterPro" id="IPR029044">
    <property type="entry name" value="Nucleotide-diphossugar_trans"/>
</dbReference>
<dbReference type="NCBIfam" id="TIGR03552">
    <property type="entry name" value="F420_cofC"/>
    <property type="match status" value="1"/>
</dbReference>
<dbReference type="PANTHER" id="PTHR40392">
    <property type="entry name" value="2-PHOSPHO-L-LACTATE GUANYLYLTRANSFERASE"/>
    <property type="match status" value="1"/>
</dbReference>
<dbReference type="PANTHER" id="PTHR40392:SF1">
    <property type="entry name" value="2-PHOSPHO-L-LACTATE GUANYLYLTRANSFERASE"/>
    <property type="match status" value="1"/>
</dbReference>
<dbReference type="Pfam" id="PF01983">
    <property type="entry name" value="CofC"/>
    <property type="match status" value="1"/>
</dbReference>
<dbReference type="SUPFAM" id="SSF53448">
    <property type="entry name" value="Nucleotide-diphospho-sugar transferases"/>
    <property type="match status" value="1"/>
</dbReference>
<accession>B0R6P7</accession>
<protein>
    <recommendedName>
        <fullName evidence="1">2-phospho-L-lactate guanylyltransferase</fullName>
        <shortName evidence="1">LP guanylyltransferase</shortName>
        <ecNumber evidence="1">2.7.7.68</ecNumber>
    </recommendedName>
</protein>
<feature type="chain" id="PRO_0000398727" description="2-phospho-L-lactate guanylyltransferase">
    <location>
        <begin position="1"/>
        <end position="209"/>
    </location>
</feature>
<reference key="1">
    <citation type="journal article" date="2008" name="Genomics">
        <title>Evolution in the laboratory: the genome of Halobacterium salinarum strain R1 compared to that of strain NRC-1.</title>
        <authorList>
            <person name="Pfeiffer F."/>
            <person name="Schuster S.C."/>
            <person name="Broicher A."/>
            <person name="Falb M."/>
            <person name="Palm P."/>
            <person name="Rodewald K."/>
            <person name="Ruepp A."/>
            <person name="Soppa J."/>
            <person name="Tittor J."/>
            <person name="Oesterhelt D."/>
        </authorList>
    </citation>
    <scope>NUCLEOTIDE SEQUENCE [LARGE SCALE GENOMIC DNA]</scope>
    <source>
        <strain>ATCC 29341 / DSM 671 / R1</strain>
    </source>
</reference>
<organism>
    <name type="scientific">Halobacterium salinarum (strain ATCC 29341 / DSM 671 / R1)</name>
    <dbReference type="NCBI Taxonomy" id="478009"/>
    <lineage>
        <taxon>Archaea</taxon>
        <taxon>Methanobacteriati</taxon>
        <taxon>Methanobacteriota</taxon>
        <taxon>Stenosarchaea group</taxon>
        <taxon>Halobacteria</taxon>
        <taxon>Halobacteriales</taxon>
        <taxon>Halobacteriaceae</taxon>
        <taxon>Halobacterium</taxon>
        <taxon>Halobacterium salinarum NRC-34001</taxon>
    </lineage>
</organism>
<sequence length="209" mass="21875">MRTVVPFDPRDPKSRLAEFFADAEERRGFAYAMLADVLGAVRDAGGDPVVVATAPVSRPVDAPVTVDDRALSTAVAAAIADGPLPTAVVMADLALATPDAIRRVFAASGDVVLAPGSGGGTNVVLARTADVPVSYHGVSFRDHVTAAERAGLTVTTVDSFRLAADVDDASDLVDVFVHNTRRTREWLIAGGWRLAVDDGTPTVVREPND</sequence>
<proteinExistence type="inferred from homology"/>
<keyword id="KW-0342">GTP-binding</keyword>
<keyword id="KW-0547">Nucleotide-binding</keyword>
<keyword id="KW-0548">Nucleotidyltransferase</keyword>
<keyword id="KW-0808">Transferase</keyword>
<evidence type="ECO:0000255" key="1">
    <source>
        <dbReference type="HAMAP-Rule" id="MF_02114"/>
    </source>
</evidence>
<comment type="function">
    <text evidence="1">Guanylyltransferase that catalyzes the activation of (2S)-2-phospholactate (2-PL) as (2S)-lactyl-2-diphospho-5'-guanosine, via the condensation of 2-PL with GTP. It is involved in the biosynthesis of coenzyme F420, a hydride carrier cofactor.</text>
</comment>
<comment type="catalytic activity">
    <reaction evidence="1">
        <text>(2S)-2-phospholactate + GTP + H(+) = (2S)-lactyl-2-diphospho-5'-guanosine + diphosphate</text>
        <dbReference type="Rhea" id="RHEA:63424"/>
        <dbReference type="ChEBI" id="CHEBI:15378"/>
        <dbReference type="ChEBI" id="CHEBI:33019"/>
        <dbReference type="ChEBI" id="CHEBI:37565"/>
        <dbReference type="ChEBI" id="CHEBI:59435"/>
        <dbReference type="ChEBI" id="CHEBI:59906"/>
        <dbReference type="EC" id="2.7.7.68"/>
    </reaction>
</comment>
<comment type="pathway">
    <text evidence="1">Cofactor biosynthesis; coenzyme F420 biosynthesis.</text>
</comment>
<comment type="subunit">
    <text evidence="1">Homodimer.</text>
</comment>
<comment type="similarity">
    <text evidence="1">Belongs to the CofC family.</text>
</comment>
<gene>
    <name evidence="1" type="primary">cofC</name>
    <name type="ordered locus">OE_3721F</name>
</gene>